<sequence>MTQQITLIKDKILSDNYFTLHNITYDLTRKDGEVIRHKREVYDRGNGATILLYNTKKKTVVLIRQFRVATWVNGNESGQLIESCAGLLDNDEPEVCIRKEAIEETGYEVGEVRKLFELYMSPGGVTELIHFFIAEYSDNQRANAGGGVEDEDIEVLELPFSQALEMIKTGEIRDGKTVLLLNYLQTSHLMD</sequence>
<protein>
    <recommendedName>
        <fullName>GDP-mannose pyrophosphatase</fullName>
        <ecNumber evidence="1">3.6.1.-</ecNumber>
    </recommendedName>
    <alternativeName>
        <fullName>GDP-mannose hydrolase</fullName>
    </alternativeName>
    <alternativeName>
        <fullName>GDPMK</fullName>
    </alternativeName>
</protein>
<evidence type="ECO:0000250" key="1">
    <source>
        <dbReference type="UniProtKB" id="P37128"/>
    </source>
</evidence>
<evidence type="ECO:0000255" key="2">
    <source>
        <dbReference type="PROSITE-ProRule" id="PRU00794"/>
    </source>
</evidence>
<evidence type="ECO:0000305" key="3"/>
<dbReference type="EC" id="3.6.1.-" evidence="1"/>
<dbReference type="EMBL" id="CP000948">
    <property type="protein sequence ID" value="ACB03618.1"/>
    <property type="molecule type" value="Genomic_DNA"/>
</dbReference>
<dbReference type="RefSeq" id="WP_001300814.1">
    <property type="nucleotide sequence ID" value="NC_010473.1"/>
</dbReference>
<dbReference type="SMR" id="B1XAD8"/>
<dbReference type="KEGG" id="ecd:ECDH10B_2632"/>
<dbReference type="HOGENOM" id="CLU_062658_6_0_6"/>
<dbReference type="GO" id="GO:0005829">
    <property type="term" value="C:cytosol"/>
    <property type="evidence" value="ECO:0007669"/>
    <property type="project" value="TreeGrafter"/>
</dbReference>
<dbReference type="GO" id="GO:0016818">
    <property type="term" value="F:hydrolase activity, acting on acid anhydrides, in phosphorus-containing anhydrides"/>
    <property type="evidence" value="ECO:0007669"/>
    <property type="project" value="InterPro"/>
</dbReference>
<dbReference type="GO" id="GO:0046872">
    <property type="term" value="F:metal ion binding"/>
    <property type="evidence" value="ECO:0007669"/>
    <property type="project" value="UniProtKB-KW"/>
</dbReference>
<dbReference type="GO" id="GO:0006753">
    <property type="term" value="P:nucleoside phosphate metabolic process"/>
    <property type="evidence" value="ECO:0007669"/>
    <property type="project" value="TreeGrafter"/>
</dbReference>
<dbReference type="GO" id="GO:0019693">
    <property type="term" value="P:ribose phosphate metabolic process"/>
    <property type="evidence" value="ECO:0007669"/>
    <property type="project" value="TreeGrafter"/>
</dbReference>
<dbReference type="CDD" id="cd24157">
    <property type="entry name" value="NUDIX_GDPMK"/>
    <property type="match status" value="1"/>
</dbReference>
<dbReference type="FunFam" id="3.90.79.10:FF:000010">
    <property type="entry name" value="GDP-mannose pyrophosphatase NudK"/>
    <property type="match status" value="1"/>
</dbReference>
<dbReference type="Gene3D" id="3.90.79.10">
    <property type="entry name" value="Nucleoside Triphosphate Pyrophosphohydrolase"/>
    <property type="match status" value="1"/>
</dbReference>
<dbReference type="InterPro" id="IPR004385">
    <property type="entry name" value="NDP_pyrophosphatase"/>
</dbReference>
<dbReference type="InterPro" id="IPR015797">
    <property type="entry name" value="NUDIX_hydrolase-like_dom_sf"/>
</dbReference>
<dbReference type="InterPro" id="IPR000086">
    <property type="entry name" value="NUDIX_hydrolase_dom"/>
</dbReference>
<dbReference type="NCBIfam" id="TIGR00052">
    <property type="entry name" value="nudix-type nucleoside diphosphatase, YffH/AdpP family"/>
    <property type="match status" value="1"/>
</dbReference>
<dbReference type="NCBIfam" id="NF011585">
    <property type="entry name" value="PRK15009.1"/>
    <property type="match status" value="1"/>
</dbReference>
<dbReference type="PANTHER" id="PTHR11839:SF18">
    <property type="entry name" value="NUDIX HYDROLASE DOMAIN-CONTAINING PROTEIN"/>
    <property type="match status" value="1"/>
</dbReference>
<dbReference type="PANTHER" id="PTHR11839">
    <property type="entry name" value="UDP/ADP-SUGAR PYROPHOSPHATASE"/>
    <property type="match status" value="1"/>
</dbReference>
<dbReference type="Pfam" id="PF00293">
    <property type="entry name" value="NUDIX"/>
    <property type="match status" value="1"/>
</dbReference>
<dbReference type="SUPFAM" id="SSF55811">
    <property type="entry name" value="Nudix"/>
    <property type="match status" value="1"/>
</dbReference>
<dbReference type="PROSITE" id="PS51462">
    <property type="entry name" value="NUDIX"/>
    <property type="match status" value="1"/>
</dbReference>
<reference key="1">
    <citation type="journal article" date="2008" name="J. Bacteriol.">
        <title>The complete genome sequence of Escherichia coli DH10B: insights into the biology of a laboratory workhorse.</title>
        <authorList>
            <person name="Durfee T."/>
            <person name="Nelson R."/>
            <person name="Baldwin S."/>
            <person name="Plunkett G. III"/>
            <person name="Burland V."/>
            <person name="Mau B."/>
            <person name="Petrosino J.F."/>
            <person name="Qin X."/>
            <person name="Muzny D.M."/>
            <person name="Ayele M."/>
            <person name="Gibbs R.A."/>
            <person name="Csorgo B."/>
            <person name="Posfai G."/>
            <person name="Weinstock G.M."/>
            <person name="Blattner F.R."/>
        </authorList>
    </citation>
    <scope>NUCLEOTIDE SEQUENCE [LARGE SCALE GENOMIC DNA]</scope>
    <source>
        <strain>K12 / DH10B</strain>
    </source>
</reference>
<keyword id="KW-0378">Hydrolase</keyword>
<keyword id="KW-0460">Magnesium</keyword>
<keyword id="KW-0479">Metal-binding</keyword>
<proteinExistence type="inferred from homology"/>
<comment type="function">
    <text evidence="1">Nucleoside diphosphate sugar hydrolase that hydrolyzes GDP-mannose as its preferred substrate, yielding GMP and mannose-1-phosphate.</text>
</comment>
<comment type="catalytic activity">
    <reaction evidence="1">
        <text>GDP-alpha-D-mannose + H2O = alpha-D-mannose 1-phosphate + GMP + 2 H(+)</text>
        <dbReference type="Rhea" id="RHEA:27978"/>
        <dbReference type="ChEBI" id="CHEBI:15377"/>
        <dbReference type="ChEBI" id="CHEBI:15378"/>
        <dbReference type="ChEBI" id="CHEBI:57527"/>
        <dbReference type="ChEBI" id="CHEBI:58115"/>
        <dbReference type="ChEBI" id="CHEBI:58409"/>
    </reaction>
</comment>
<comment type="cofactor">
    <cofactor evidence="1">
        <name>Mg(2+)</name>
        <dbReference type="ChEBI" id="CHEBI:18420"/>
    </cofactor>
</comment>
<comment type="subunit">
    <text evidence="1">Homodimer.</text>
</comment>
<comment type="domain">
    <text evidence="1">In the dimer, the N-terminal domains are swapped between the two monomers, such that residues of both chains contribute to the active site.</text>
</comment>
<comment type="similarity">
    <text evidence="3">Belongs to the Nudix hydrolase family. NudK subfamily.</text>
</comment>
<organism>
    <name type="scientific">Escherichia coli (strain K12 / DH10B)</name>
    <dbReference type="NCBI Taxonomy" id="316385"/>
    <lineage>
        <taxon>Bacteria</taxon>
        <taxon>Pseudomonadati</taxon>
        <taxon>Pseudomonadota</taxon>
        <taxon>Gammaproteobacteria</taxon>
        <taxon>Enterobacterales</taxon>
        <taxon>Enterobacteriaceae</taxon>
        <taxon>Escherichia</taxon>
    </lineage>
</organism>
<feature type="chain" id="PRO_0000342483" description="GDP-mannose pyrophosphatase">
    <location>
        <begin position="1"/>
        <end position="191"/>
    </location>
</feature>
<feature type="domain" description="Nudix hydrolase" evidence="2">
    <location>
        <begin position="43"/>
        <end position="180"/>
    </location>
</feature>
<feature type="short sequence motif" description="Nudix box">
    <location>
        <begin position="86"/>
        <end position="106"/>
    </location>
</feature>
<feature type="binding site" description="in other chain" evidence="1">
    <location>
        <position position="17"/>
    </location>
    <ligand>
        <name>GDP-alpha-D-mannose</name>
        <dbReference type="ChEBI" id="CHEBI:57527"/>
        <note>ligand shared between dimeric partners</note>
    </ligand>
</feature>
<feature type="binding site" evidence="1">
    <location>
        <begin position="38"/>
        <end position="40"/>
    </location>
    <ligand>
        <name>GDP-alpha-D-mannose</name>
        <dbReference type="ChEBI" id="CHEBI:57527"/>
        <note>ligand shared between dimeric partners</note>
    </ligand>
</feature>
<feature type="binding site" description="in other chain" evidence="1">
    <location>
        <position position="67"/>
    </location>
    <ligand>
        <name>GDP-alpha-D-mannose</name>
        <dbReference type="ChEBI" id="CHEBI:57527"/>
        <note>ligand shared between dimeric partners</note>
    </ligand>
</feature>
<feature type="binding site" description="in other chain" evidence="1">
    <location>
        <begin position="85"/>
        <end position="87"/>
    </location>
    <ligand>
        <name>GDP-alpha-D-mannose</name>
        <dbReference type="ChEBI" id="CHEBI:57527"/>
        <note>ligand shared between dimeric partners</note>
    </ligand>
</feature>
<feature type="binding site" evidence="1">
    <location>
        <position position="85"/>
    </location>
    <ligand>
        <name>Mg(2+)</name>
        <dbReference type="ChEBI" id="CHEBI:18420"/>
        <label>1</label>
    </ligand>
</feature>
<feature type="binding site" evidence="1">
    <location>
        <position position="100"/>
    </location>
    <ligand>
        <name>Mg(2+)</name>
        <dbReference type="ChEBI" id="CHEBI:18420"/>
        <label>2</label>
    </ligand>
</feature>
<feature type="binding site" description="in other chain" evidence="1">
    <location>
        <position position="104"/>
    </location>
    <ligand>
        <name>GDP-alpha-D-mannose</name>
        <dbReference type="ChEBI" id="CHEBI:57527"/>
        <note>ligand shared between dimeric partners</note>
    </ligand>
</feature>
<feature type="binding site" evidence="1">
    <location>
        <position position="104"/>
    </location>
    <ligand>
        <name>Mg(2+)</name>
        <dbReference type="ChEBI" id="CHEBI:18420"/>
        <label>1</label>
    </ligand>
</feature>
<feature type="binding site" evidence="1">
    <location>
        <position position="104"/>
    </location>
    <ligand>
        <name>Mg(2+)</name>
        <dbReference type="ChEBI" id="CHEBI:18420"/>
        <label>2</label>
    </ligand>
</feature>
<feature type="binding site" description="in other chain" evidence="1">
    <location>
        <position position="127"/>
    </location>
    <ligand>
        <name>GDP-alpha-D-mannose</name>
        <dbReference type="ChEBI" id="CHEBI:57527"/>
        <note>ligand shared between dimeric partners</note>
    </ligand>
</feature>
<feature type="binding site" description="in other chain" evidence="1">
    <location>
        <begin position="150"/>
        <end position="151"/>
    </location>
    <ligand>
        <name>GDP-alpha-D-mannose</name>
        <dbReference type="ChEBI" id="CHEBI:57527"/>
        <note>ligand shared between dimeric partners</note>
    </ligand>
</feature>
<feature type="binding site" evidence="1">
    <location>
        <position position="151"/>
    </location>
    <ligand>
        <name>Mg(2+)</name>
        <dbReference type="ChEBI" id="CHEBI:18420"/>
        <label>2</label>
    </ligand>
</feature>
<feature type="binding site" description="in other chain" evidence="1">
    <location>
        <position position="176"/>
    </location>
    <ligand>
        <name>GDP-alpha-D-mannose</name>
        <dbReference type="ChEBI" id="CHEBI:57527"/>
        <note>ligand shared between dimeric partners</note>
    </ligand>
</feature>
<name>NUDK_ECODH</name>
<accession>B1XAD8</accession>
<gene>
    <name type="primary">nudK</name>
    <name type="ordered locus">ECDH10B_2632</name>
</gene>